<organism>
    <name type="scientific">Bacillus cereus (strain AH820)</name>
    <dbReference type="NCBI Taxonomy" id="405535"/>
    <lineage>
        <taxon>Bacteria</taxon>
        <taxon>Bacillati</taxon>
        <taxon>Bacillota</taxon>
        <taxon>Bacilli</taxon>
        <taxon>Bacillales</taxon>
        <taxon>Bacillaceae</taxon>
        <taxon>Bacillus</taxon>
        <taxon>Bacillus cereus group</taxon>
    </lineage>
</organism>
<proteinExistence type="inferred from homology"/>
<name>ATPE_BACC0</name>
<sequence>MKTFPVSIVTPDGPVYEKEVEMVSVKAESGEMGILPGHIPTVAPLKISAVRLKNGGHTDYVAVSGGFIEVRPDKVTVLSSSAEEANHIDIHRANEAKRRAEQRMQDKQAHVDFKRAEMALQRAVNRLNVSDMK</sequence>
<feature type="chain" id="PRO_1000127823" description="ATP synthase epsilon chain">
    <location>
        <begin position="1"/>
        <end position="133"/>
    </location>
</feature>
<protein>
    <recommendedName>
        <fullName evidence="1">ATP synthase epsilon chain</fullName>
    </recommendedName>
    <alternativeName>
        <fullName evidence="1">ATP synthase F1 sector epsilon subunit</fullName>
    </alternativeName>
    <alternativeName>
        <fullName evidence="1">F-ATPase epsilon subunit</fullName>
    </alternativeName>
</protein>
<comment type="function">
    <text evidence="1">Produces ATP from ADP in the presence of a proton gradient across the membrane.</text>
</comment>
<comment type="subunit">
    <text evidence="1">F-type ATPases have 2 components, CF(1) - the catalytic core - and CF(0) - the membrane proton channel. CF(1) has five subunits: alpha(3), beta(3), gamma(1), delta(1), epsilon(1). CF(0) has three main subunits: a, b and c.</text>
</comment>
<comment type="subcellular location">
    <subcellularLocation>
        <location evidence="1">Cell membrane</location>
        <topology evidence="1">Peripheral membrane protein</topology>
    </subcellularLocation>
</comment>
<comment type="similarity">
    <text evidence="1">Belongs to the ATPase epsilon chain family.</text>
</comment>
<gene>
    <name evidence="1" type="primary">atpC</name>
    <name type="ordered locus">BCAH820_5395</name>
</gene>
<reference key="1">
    <citation type="submission" date="2008-10" db="EMBL/GenBank/DDBJ databases">
        <title>Genome sequence of Bacillus cereus AH820.</title>
        <authorList>
            <person name="Dodson R.J."/>
            <person name="Durkin A.S."/>
            <person name="Rosovitz M.J."/>
            <person name="Rasko D.A."/>
            <person name="Hoffmaster A."/>
            <person name="Ravel J."/>
            <person name="Sutton G."/>
        </authorList>
    </citation>
    <scope>NUCLEOTIDE SEQUENCE [LARGE SCALE GENOMIC DNA]</scope>
    <source>
        <strain>AH820</strain>
    </source>
</reference>
<evidence type="ECO:0000255" key="1">
    <source>
        <dbReference type="HAMAP-Rule" id="MF_00530"/>
    </source>
</evidence>
<accession>B7JGM9</accession>
<dbReference type="EMBL" id="CP001283">
    <property type="protein sequence ID" value="ACK87577.1"/>
    <property type="molecule type" value="Genomic_DNA"/>
</dbReference>
<dbReference type="RefSeq" id="WP_000847214.1">
    <property type="nucleotide sequence ID" value="NC_011773.1"/>
</dbReference>
<dbReference type="SMR" id="B7JGM9"/>
<dbReference type="GeneID" id="64186571"/>
<dbReference type="KEGG" id="bcu:BCAH820_5395"/>
<dbReference type="HOGENOM" id="CLU_084338_1_3_9"/>
<dbReference type="Proteomes" id="UP000001363">
    <property type="component" value="Chromosome"/>
</dbReference>
<dbReference type="GO" id="GO:0005886">
    <property type="term" value="C:plasma membrane"/>
    <property type="evidence" value="ECO:0007669"/>
    <property type="project" value="UniProtKB-SubCell"/>
</dbReference>
<dbReference type="GO" id="GO:0045259">
    <property type="term" value="C:proton-transporting ATP synthase complex"/>
    <property type="evidence" value="ECO:0007669"/>
    <property type="project" value="UniProtKB-KW"/>
</dbReference>
<dbReference type="GO" id="GO:0005524">
    <property type="term" value="F:ATP binding"/>
    <property type="evidence" value="ECO:0007669"/>
    <property type="project" value="UniProtKB-UniRule"/>
</dbReference>
<dbReference type="GO" id="GO:0046933">
    <property type="term" value="F:proton-transporting ATP synthase activity, rotational mechanism"/>
    <property type="evidence" value="ECO:0007669"/>
    <property type="project" value="UniProtKB-UniRule"/>
</dbReference>
<dbReference type="CDD" id="cd12152">
    <property type="entry name" value="F1-ATPase_delta"/>
    <property type="match status" value="1"/>
</dbReference>
<dbReference type="FunFam" id="1.20.5.440:FF:000001">
    <property type="entry name" value="ATP synthase epsilon chain"/>
    <property type="match status" value="1"/>
</dbReference>
<dbReference type="FunFam" id="2.60.15.10:FF:000001">
    <property type="entry name" value="ATP synthase epsilon chain"/>
    <property type="match status" value="1"/>
</dbReference>
<dbReference type="Gene3D" id="1.20.5.440">
    <property type="entry name" value="ATP synthase delta/epsilon subunit, C-terminal domain"/>
    <property type="match status" value="1"/>
</dbReference>
<dbReference type="Gene3D" id="2.60.15.10">
    <property type="entry name" value="F0F1 ATP synthase delta/epsilon subunit, N-terminal"/>
    <property type="match status" value="1"/>
</dbReference>
<dbReference type="HAMAP" id="MF_00530">
    <property type="entry name" value="ATP_synth_epsil_bac"/>
    <property type="match status" value="1"/>
</dbReference>
<dbReference type="InterPro" id="IPR036794">
    <property type="entry name" value="ATP_F1_dsu/esu_C_sf"/>
</dbReference>
<dbReference type="InterPro" id="IPR001469">
    <property type="entry name" value="ATP_synth_F1_dsu/esu"/>
</dbReference>
<dbReference type="InterPro" id="IPR020546">
    <property type="entry name" value="ATP_synth_F1_dsu/esu_N"/>
</dbReference>
<dbReference type="InterPro" id="IPR020547">
    <property type="entry name" value="ATP_synth_F1_esu_C"/>
</dbReference>
<dbReference type="InterPro" id="IPR036771">
    <property type="entry name" value="ATPsynth_dsu/esu_N"/>
</dbReference>
<dbReference type="NCBIfam" id="TIGR01216">
    <property type="entry name" value="ATP_synt_epsi"/>
    <property type="match status" value="1"/>
</dbReference>
<dbReference type="NCBIfam" id="NF001846">
    <property type="entry name" value="PRK00571.1-3"/>
    <property type="match status" value="1"/>
</dbReference>
<dbReference type="NCBIfam" id="NF009980">
    <property type="entry name" value="PRK13446.1"/>
    <property type="match status" value="1"/>
</dbReference>
<dbReference type="PANTHER" id="PTHR13822">
    <property type="entry name" value="ATP SYNTHASE DELTA/EPSILON CHAIN"/>
    <property type="match status" value="1"/>
</dbReference>
<dbReference type="PANTHER" id="PTHR13822:SF10">
    <property type="entry name" value="ATP SYNTHASE EPSILON CHAIN, CHLOROPLASTIC"/>
    <property type="match status" value="1"/>
</dbReference>
<dbReference type="Pfam" id="PF00401">
    <property type="entry name" value="ATP-synt_DE"/>
    <property type="match status" value="1"/>
</dbReference>
<dbReference type="Pfam" id="PF02823">
    <property type="entry name" value="ATP-synt_DE_N"/>
    <property type="match status" value="1"/>
</dbReference>
<dbReference type="SUPFAM" id="SSF46604">
    <property type="entry name" value="Epsilon subunit of F1F0-ATP synthase C-terminal domain"/>
    <property type="match status" value="1"/>
</dbReference>
<dbReference type="SUPFAM" id="SSF51344">
    <property type="entry name" value="Epsilon subunit of F1F0-ATP synthase N-terminal domain"/>
    <property type="match status" value="1"/>
</dbReference>
<keyword id="KW-0066">ATP synthesis</keyword>
<keyword id="KW-1003">Cell membrane</keyword>
<keyword id="KW-0139">CF(1)</keyword>
<keyword id="KW-0375">Hydrogen ion transport</keyword>
<keyword id="KW-0406">Ion transport</keyword>
<keyword id="KW-0472">Membrane</keyword>
<keyword id="KW-0813">Transport</keyword>